<comment type="function">
    <text evidence="1">Transporter involved in a passive nitrate efflux.</text>
</comment>
<comment type="subcellular location">
    <subcellularLocation>
        <location evidence="1">Membrane</location>
        <topology evidence="1">Multi-pass membrane protein</topology>
    </subcellularLocation>
</comment>
<comment type="tissue specificity">
    <text evidence="3">Not detected.</text>
</comment>
<comment type="similarity">
    <text evidence="4">Belongs to the major facilitator superfamily. Proton-dependent oligopeptide transporter (POT/PTR) (TC 2.A.17) family.</text>
</comment>
<comment type="caution">
    <text evidence="4">Could be the product of a pseudogene.</text>
</comment>
<name>PTR40_ARATH</name>
<accession>Q9M174</accession>
<organism>
    <name type="scientific">Arabidopsis thaliana</name>
    <name type="common">Mouse-ear cress</name>
    <dbReference type="NCBI Taxonomy" id="3702"/>
    <lineage>
        <taxon>Eukaryota</taxon>
        <taxon>Viridiplantae</taxon>
        <taxon>Streptophyta</taxon>
        <taxon>Embryophyta</taxon>
        <taxon>Tracheophyta</taxon>
        <taxon>Spermatophyta</taxon>
        <taxon>Magnoliopsida</taxon>
        <taxon>eudicotyledons</taxon>
        <taxon>Gunneridae</taxon>
        <taxon>Pentapetalae</taxon>
        <taxon>rosids</taxon>
        <taxon>malvids</taxon>
        <taxon>Brassicales</taxon>
        <taxon>Brassicaceae</taxon>
        <taxon>Camelineae</taxon>
        <taxon>Arabidopsis</taxon>
    </lineage>
</organism>
<feature type="chain" id="PRO_0000399974" description="Putative protein NRT1/ PTR FAMILY 2.2">
    <location>
        <begin position="1"/>
        <end position="516"/>
    </location>
</feature>
<feature type="transmembrane region" description="Helical" evidence="2">
    <location>
        <begin position="31"/>
        <end position="51"/>
    </location>
</feature>
<feature type="transmembrane region" description="Helical" evidence="2">
    <location>
        <begin position="67"/>
        <end position="87"/>
    </location>
</feature>
<feature type="transmembrane region" description="Helical" evidence="2">
    <location>
        <begin position="90"/>
        <end position="110"/>
    </location>
</feature>
<feature type="transmembrane region" description="Helical" evidence="2">
    <location>
        <begin position="138"/>
        <end position="158"/>
    </location>
</feature>
<feature type="transmembrane region" description="Helical" evidence="2">
    <location>
        <begin position="174"/>
        <end position="194"/>
    </location>
</feature>
<feature type="transmembrane region" description="Helical" evidence="2">
    <location>
        <begin position="201"/>
        <end position="221"/>
    </location>
</feature>
<feature type="transmembrane region" description="Helical" evidence="2">
    <location>
        <begin position="320"/>
        <end position="340"/>
    </location>
</feature>
<feature type="transmembrane region" description="Helical" evidence="2">
    <location>
        <begin position="362"/>
        <end position="382"/>
    </location>
</feature>
<feature type="transmembrane region" description="Helical" evidence="2">
    <location>
        <begin position="394"/>
        <end position="414"/>
    </location>
</feature>
<feature type="transmembrane region" description="Helical" evidence="2">
    <location>
        <begin position="437"/>
        <end position="457"/>
    </location>
</feature>
<feature type="transmembrane region" description="Helical" evidence="2">
    <location>
        <begin position="476"/>
        <end position="496"/>
    </location>
</feature>
<gene>
    <name type="primary">NPF2.2</name>
    <name type="ordered locus">At3g45690</name>
    <name type="ORF">T6D9.20</name>
</gene>
<sequence>MARSVDTEAMTTRDPSSKRGGWKTFPFMIATLLGLSIASFGWVMNLVVFLIKEFNIKSIAATQNSNIVNGCVSMLPVVAAILADSFFGNIPVISVSAFISLLGIILLTMITSLDHLRPPPCETGSILCESPSKLQLGILYIALALVIIGSAGTRFTLASAGANQYEKPKEQGSFFNWYFLTLYTGAITGATAIVYTQENASWKLGFGLCAVANLISFIVFVSGKRYYKHDKPMGSPFTNLIRVVVAATRKRKAVISSREEDYHHGLGREGKTSSAMPSKSFRFFNRAALKTEDDSVNNNWRLCSVQEVEDFKAVFRVLPLLLAIIFVSTPMVTQTSLIILQALVTDRGLGPHFKIPAGSLQVIVIITACIVILMNNCLVYPMYQKLAHKPLTPLQKVGIGHVFIILSMAISAIVEAKRLKTVTNGHSMSVLWLHRDFIASVVIGISFYLSTALITLIQKTTKWLPNDINHGRVDNVYWLLVIVGVLNYFLVCAWFYRYRNLNDDDDQEQDPKDDTT</sequence>
<reference key="1">
    <citation type="journal article" date="2000" name="Nature">
        <title>Sequence and analysis of chromosome 3 of the plant Arabidopsis thaliana.</title>
        <authorList>
            <person name="Salanoubat M."/>
            <person name="Lemcke K."/>
            <person name="Rieger M."/>
            <person name="Ansorge W."/>
            <person name="Unseld M."/>
            <person name="Fartmann B."/>
            <person name="Valle G."/>
            <person name="Bloecker H."/>
            <person name="Perez-Alonso M."/>
            <person name="Obermaier B."/>
            <person name="Delseny M."/>
            <person name="Boutry M."/>
            <person name="Grivell L.A."/>
            <person name="Mache R."/>
            <person name="Puigdomenech P."/>
            <person name="De Simone V."/>
            <person name="Choisne N."/>
            <person name="Artiguenave F."/>
            <person name="Robert C."/>
            <person name="Brottier P."/>
            <person name="Wincker P."/>
            <person name="Cattolico L."/>
            <person name="Weissenbach J."/>
            <person name="Saurin W."/>
            <person name="Quetier F."/>
            <person name="Schaefer M."/>
            <person name="Mueller-Auer S."/>
            <person name="Gabel C."/>
            <person name="Fuchs M."/>
            <person name="Benes V."/>
            <person name="Wurmbach E."/>
            <person name="Drzonek H."/>
            <person name="Erfle H."/>
            <person name="Jordan N."/>
            <person name="Bangert S."/>
            <person name="Wiedelmann R."/>
            <person name="Kranz H."/>
            <person name="Voss H."/>
            <person name="Holland R."/>
            <person name="Brandt P."/>
            <person name="Nyakatura G."/>
            <person name="Vezzi A."/>
            <person name="D'Angelo M."/>
            <person name="Pallavicini A."/>
            <person name="Toppo S."/>
            <person name="Simionati B."/>
            <person name="Conrad A."/>
            <person name="Hornischer K."/>
            <person name="Kauer G."/>
            <person name="Loehnert T.-H."/>
            <person name="Nordsiek G."/>
            <person name="Reichelt J."/>
            <person name="Scharfe M."/>
            <person name="Schoen O."/>
            <person name="Bargues M."/>
            <person name="Terol J."/>
            <person name="Climent J."/>
            <person name="Navarro P."/>
            <person name="Collado C."/>
            <person name="Perez-Perez A."/>
            <person name="Ottenwaelder B."/>
            <person name="Duchemin D."/>
            <person name="Cooke R."/>
            <person name="Laudie M."/>
            <person name="Berger-Llauro C."/>
            <person name="Purnelle B."/>
            <person name="Masuy D."/>
            <person name="de Haan M."/>
            <person name="Maarse A.C."/>
            <person name="Alcaraz J.-P."/>
            <person name="Cottet A."/>
            <person name="Casacuberta E."/>
            <person name="Monfort A."/>
            <person name="Argiriou A."/>
            <person name="Flores M."/>
            <person name="Liguori R."/>
            <person name="Vitale D."/>
            <person name="Mannhaupt G."/>
            <person name="Haase D."/>
            <person name="Schoof H."/>
            <person name="Rudd S."/>
            <person name="Zaccaria P."/>
            <person name="Mewes H.-W."/>
            <person name="Mayer K.F.X."/>
            <person name="Kaul S."/>
            <person name="Town C.D."/>
            <person name="Koo H.L."/>
            <person name="Tallon L.J."/>
            <person name="Jenkins J."/>
            <person name="Rooney T."/>
            <person name="Rizzo M."/>
            <person name="Walts A."/>
            <person name="Utterback T."/>
            <person name="Fujii C.Y."/>
            <person name="Shea T.P."/>
            <person name="Creasy T.H."/>
            <person name="Haas B."/>
            <person name="Maiti R."/>
            <person name="Wu D."/>
            <person name="Peterson J."/>
            <person name="Van Aken S."/>
            <person name="Pai G."/>
            <person name="Militscher J."/>
            <person name="Sellers P."/>
            <person name="Gill J.E."/>
            <person name="Feldblyum T.V."/>
            <person name="Preuss D."/>
            <person name="Lin X."/>
            <person name="Nierman W.C."/>
            <person name="Salzberg S.L."/>
            <person name="White O."/>
            <person name="Venter J.C."/>
            <person name="Fraser C.M."/>
            <person name="Kaneko T."/>
            <person name="Nakamura Y."/>
            <person name="Sato S."/>
            <person name="Kato T."/>
            <person name="Asamizu E."/>
            <person name="Sasamoto S."/>
            <person name="Kimura T."/>
            <person name="Idesawa K."/>
            <person name="Kawashima K."/>
            <person name="Kishida Y."/>
            <person name="Kiyokawa C."/>
            <person name="Kohara M."/>
            <person name="Matsumoto M."/>
            <person name="Matsuno A."/>
            <person name="Muraki A."/>
            <person name="Nakayama S."/>
            <person name="Nakazaki N."/>
            <person name="Shinpo S."/>
            <person name="Takeuchi C."/>
            <person name="Wada T."/>
            <person name="Watanabe A."/>
            <person name="Yamada M."/>
            <person name="Yasuda M."/>
            <person name="Tabata S."/>
        </authorList>
    </citation>
    <scope>NUCLEOTIDE SEQUENCE [LARGE SCALE GENOMIC DNA]</scope>
    <source>
        <strain>cv. Columbia</strain>
    </source>
</reference>
<reference key="2">
    <citation type="journal article" date="2017" name="Plant J.">
        <title>Araport11: a complete reannotation of the Arabidopsis thaliana reference genome.</title>
        <authorList>
            <person name="Cheng C.Y."/>
            <person name="Krishnakumar V."/>
            <person name="Chan A.P."/>
            <person name="Thibaud-Nissen F."/>
            <person name="Schobel S."/>
            <person name="Town C.D."/>
        </authorList>
    </citation>
    <scope>GENOME REANNOTATION</scope>
    <source>
        <strain>cv. Columbia</strain>
    </source>
</reference>
<reference key="3">
    <citation type="journal article" date="2007" name="FEBS Lett.">
        <title>Nitrate transporters and peptide transporters.</title>
        <authorList>
            <person name="Tsay Y.F."/>
            <person name="Chiu C.C."/>
            <person name="Tsai C.B."/>
            <person name="Ho C.H."/>
            <person name="Hsu P.K."/>
        </authorList>
    </citation>
    <scope>TISSUE SPECIFICITY</scope>
    <scope>GENE FAMILY</scope>
</reference>
<reference key="4">
    <citation type="journal article" date="2007" name="Plant Cell">
        <title>Nitrate efflux at the root plasma membrane: identification of an Arabidopsis excretion transporter.</title>
        <authorList>
            <person name="Segonzac C."/>
            <person name="Boyer J.C."/>
            <person name="Ipotesi E."/>
            <person name="Szponarski W."/>
            <person name="Tillard P."/>
            <person name="Touraine B."/>
            <person name="Sommerer N."/>
            <person name="Rossignol M."/>
            <person name="Gibrat R."/>
        </authorList>
    </citation>
    <scope>IDENTIFICATION</scope>
</reference>
<reference key="5">
    <citation type="journal article" date="2010" name="Plant Cell">
        <title>The Arabidopsis nitrate transporter NRT1.8 functions in nitrate removal from the xylem sap and mediates cadmium tolerance.</title>
        <authorList>
            <person name="Li J.Y."/>
            <person name="Fu Y.L."/>
            <person name="Pike S.M."/>
            <person name="Bao J."/>
            <person name="Tian W."/>
            <person name="Zhang Y."/>
            <person name="Chen C.Z."/>
            <person name="Zhang Y."/>
            <person name="Li H.M."/>
            <person name="Huang J."/>
            <person name="Li L.G."/>
            <person name="Schroeder J.I."/>
            <person name="Gassmann W."/>
            <person name="Gong J.M."/>
        </authorList>
    </citation>
    <scope>GENE FAMILY</scope>
</reference>
<reference key="6">
    <citation type="journal article" date="2014" name="Trends Plant Sci.">
        <title>A unified nomenclature of NITRATE TRANSPORTER 1/PEPTIDE TRANSPORTER family members in plants.</title>
        <authorList>
            <person name="Leran S."/>
            <person name="Varala K."/>
            <person name="Boyer J.C."/>
            <person name="Chiurazzi M."/>
            <person name="Crawford N."/>
            <person name="Daniel-Vedele F."/>
            <person name="David L."/>
            <person name="Dickstein R."/>
            <person name="Fernandez E."/>
            <person name="Forde B."/>
            <person name="Gassmann W."/>
            <person name="Geiger D."/>
            <person name="Gojon A."/>
            <person name="Gong J.M."/>
            <person name="Halkier B.A."/>
            <person name="Harris J.M."/>
            <person name="Hedrich R."/>
            <person name="Limami A.M."/>
            <person name="Rentsch D."/>
            <person name="Seo M."/>
            <person name="Tsay Y.F."/>
            <person name="Zhang M."/>
            <person name="Coruzzi G."/>
            <person name="Lacombe B."/>
        </authorList>
    </citation>
    <scope>GENE FAMILY</scope>
    <scope>NOMENCLATURE</scope>
</reference>
<evidence type="ECO:0000250" key="1"/>
<evidence type="ECO:0000255" key="2"/>
<evidence type="ECO:0000269" key="3">
    <source>
    </source>
</evidence>
<evidence type="ECO:0000305" key="4"/>
<proteinExistence type="uncertain"/>
<dbReference type="EMBL" id="AL157735">
    <property type="protein sequence ID" value="CAB75782.1"/>
    <property type="molecule type" value="Genomic_DNA"/>
</dbReference>
<dbReference type="EMBL" id="CP002686">
    <property type="protein sequence ID" value="AEE78060.1"/>
    <property type="molecule type" value="Genomic_DNA"/>
</dbReference>
<dbReference type="PIR" id="T47509">
    <property type="entry name" value="T47509"/>
</dbReference>
<dbReference type="RefSeq" id="NP_190155.1">
    <property type="nucleotide sequence ID" value="NM_114438.1"/>
</dbReference>
<dbReference type="SMR" id="Q9M174"/>
<dbReference type="FunCoup" id="Q9M174">
    <property type="interactions" value="1"/>
</dbReference>
<dbReference type="STRING" id="3702.Q9M174"/>
<dbReference type="PaxDb" id="3702-AT3G45690.1"/>
<dbReference type="EnsemblPlants" id="AT3G45690.1">
    <property type="protein sequence ID" value="AT3G45690.1"/>
    <property type="gene ID" value="AT3G45690"/>
</dbReference>
<dbReference type="GeneID" id="823711"/>
<dbReference type="Gramene" id="AT3G45690.1">
    <property type="protein sequence ID" value="AT3G45690.1"/>
    <property type="gene ID" value="AT3G45690"/>
</dbReference>
<dbReference type="KEGG" id="ath:AT3G45690"/>
<dbReference type="Araport" id="AT3G45690"/>
<dbReference type="TAIR" id="AT3G45690"/>
<dbReference type="eggNOG" id="KOG1237">
    <property type="taxonomic scope" value="Eukaryota"/>
</dbReference>
<dbReference type="HOGENOM" id="CLU_009313_4_2_1"/>
<dbReference type="InParanoid" id="Q9M174"/>
<dbReference type="OMA" id="FLVCAWF"/>
<dbReference type="PhylomeDB" id="Q9M174"/>
<dbReference type="Proteomes" id="UP000006548">
    <property type="component" value="Chromosome 3"/>
</dbReference>
<dbReference type="ExpressionAtlas" id="Q9M174">
    <property type="expression patterns" value="baseline and differential"/>
</dbReference>
<dbReference type="GO" id="GO:0016020">
    <property type="term" value="C:membrane"/>
    <property type="evidence" value="ECO:0007669"/>
    <property type="project" value="UniProtKB-SubCell"/>
</dbReference>
<dbReference type="GO" id="GO:0022857">
    <property type="term" value="F:transmembrane transporter activity"/>
    <property type="evidence" value="ECO:0007669"/>
    <property type="project" value="InterPro"/>
</dbReference>
<dbReference type="GO" id="GO:0042128">
    <property type="term" value="P:nitrate assimilation"/>
    <property type="evidence" value="ECO:0007669"/>
    <property type="project" value="UniProtKB-KW"/>
</dbReference>
<dbReference type="GO" id="GO:0006857">
    <property type="term" value="P:oligopeptide transport"/>
    <property type="evidence" value="ECO:0007669"/>
    <property type="project" value="InterPro"/>
</dbReference>
<dbReference type="CDD" id="cd17416">
    <property type="entry name" value="MFS_NPF1_2"/>
    <property type="match status" value="1"/>
</dbReference>
<dbReference type="Gene3D" id="1.20.1250.20">
    <property type="entry name" value="MFS general substrate transporter like domains"/>
    <property type="match status" value="1"/>
</dbReference>
<dbReference type="InterPro" id="IPR036259">
    <property type="entry name" value="MFS_trans_sf"/>
</dbReference>
<dbReference type="InterPro" id="IPR000109">
    <property type="entry name" value="POT_fam"/>
</dbReference>
<dbReference type="InterPro" id="IPR018456">
    <property type="entry name" value="PTR2_symporter_CS"/>
</dbReference>
<dbReference type="PANTHER" id="PTHR11654">
    <property type="entry name" value="OLIGOPEPTIDE TRANSPORTER-RELATED"/>
    <property type="match status" value="1"/>
</dbReference>
<dbReference type="Pfam" id="PF00854">
    <property type="entry name" value="PTR2"/>
    <property type="match status" value="1"/>
</dbReference>
<dbReference type="SUPFAM" id="SSF103473">
    <property type="entry name" value="MFS general substrate transporter"/>
    <property type="match status" value="1"/>
</dbReference>
<dbReference type="PROSITE" id="PS01022">
    <property type="entry name" value="PTR2_1"/>
    <property type="match status" value="1"/>
</dbReference>
<protein>
    <recommendedName>
        <fullName>Putative protein NRT1/ PTR FAMILY 2.2</fullName>
        <shortName>AtNPF2.2</shortName>
    </recommendedName>
    <alternativeName>
        <fullName>Protein NAXT1-like 3</fullName>
    </alternativeName>
    <alternativeName>
        <fullName>Putative nitrate excretion transporter 4</fullName>
    </alternativeName>
</protein>
<keyword id="KW-0472">Membrane</keyword>
<keyword id="KW-0534">Nitrate assimilation</keyword>
<keyword id="KW-1185">Reference proteome</keyword>
<keyword id="KW-0812">Transmembrane</keyword>
<keyword id="KW-1133">Transmembrane helix</keyword>
<keyword id="KW-0813">Transport</keyword>